<sequence>MPFELPALPYPYDALEPHIDKETMNIHHTKHHNTYVTNLNAALEGHPDLQNKSLEELLSNLEALPESIRTAVRNNGGGHANHSLFWTILSPNGGGEPTGELADAINKKFGSFTAFKDEFSKAAAGRFGSGWAWLVVNNGELEITSTPNQDSPIMEGKTPILGLDVWEHAYYLKYQNRRPEYIAAFWNVVNWDEVAKRYSEAKAK</sequence>
<accession>P00449</accession>
<comment type="function">
    <text>Destroys superoxide anion radicals which are normally produced within the cells and which are toxic to biological systems.</text>
</comment>
<comment type="catalytic activity">
    <reaction>
        <text>2 superoxide + 2 H(+) = H2O2 + O2</text>
        <dbReference type="Rhea" id="RHEA:20696"/>
        <dbReference type="ChEBI" id="CHEBI:15378"/>
        <dbReference type="ChEBI" id="CHEBI:15379"/>
        <dbReference type="ChEBI" id="CHEBI:16240"/>
        <dbReference type="ChEBI" id="CHEBI:18421"/>
        <dbReference type="EC" id="1.15.1.1"/>
    </reaction>
</comment>
<comment type="cofactor">
    <cofactor>
        <name>Mn(2+)</name>
        <dbReference type="ChEBI" id="CHEBI:29035"/>
    </cofactor>
    <text>Binds 1 Mn(2+) ion per subunit.</text>
</comment>
<comment type="subunit">
    <text>Homodimer.</text>
</comment>
<comment type="similarity">
    <text evidence="5">Belongs to the iron/manganese superoxide dismutase family.</text>
</comment>
<feature type="initiator methionine" description="Removed" evidence="2 3 4">
    <location>
        <position position="1"/>
    </location>
</feature>
<feature type="chain" id="PRO_0000160018" description="Superoxide dismutase [Mn]">
    <location>
        <begin position="2"/>
        <end position="204"/>
    </location>
</feature>
<feature type="binding site">
    <location>
        <position position="27"/>
    </location>
    <ligand>
        <name>Mn(2+)</name>
        <dbReference type="ChEBI" id="CHEBI:29035"/>
    </ligand>
</feature>
<feature type="binding site">
    <location>
        <position position="82"/>
    </location>
    <ligand>
        <name>Mn(2+)</name>
        <dbReference type="ChEBI" id="CHEBI:29035"/>
    </ligand>
</feature>
<feature type="binding site">
    <location>
        <position position="164"/>
    </location>
    <ligand>
        <name>Mn(2+)</name>
        <dbReference type="ChEBI" id="CHEBI:29035"/>
    </ligand>
</feature>
<feature type="binding site">
    <location>
        <position position="168"/>
    </location>
    <ligand>
        <name>Mn(2+)</name>
        <dbReference type="ChEBI" id="CHEBI:29035"/>
    </ligand>
</feature>
<feature type="modified residue" description="Phosphothreonine" evidence="1">
    <location>
        <position position="34"/>
    </location>
</feature>
<feature type="modified residue" description="Phosphothreonine" evidence="1">
    <location>
        <position position="70"/>
    </location>
</feature>
<feature type="sequence conflict" description="In Ref. 5; AA sequence." evidence="5" ref="5">
    <original>L</original>
    <variation>P</variation>
    <location>
        <position position="58"/>
    </location>
</feature>
<feature type="sequence conflict" description="In Ref. 4; AA sequence." evidence="5" ref="4">
    <original>A</original>
    <variation>G</variation>
    <location>
        <position position="122"/>
    </location>
</feature>
<feature type="turn" evidence="6">
    <location>
        <begin position="12"/>
        <end position="18"/>
    </location>
</feature>
<feature type="helix" evidence="6">
    <location>
        <begin position="21"/>
        <end position="29"/>
    </location>
</feature>
<feature type="helix" evidence="6">
    <location>
        <begin position="31"/>
        <end position="43"/>
    </location>
</feature>
<feature type="turn" evidence="6">
    <location>
        <begin position="47"/>
        <end position="51"/>
    </location>
</feature>
<feature type="helix" evidence="6">
    <location>
        <begin position="54"/>
        <end position="59"/>
    </location>
</feature>
<feature type="helix" evidence="6">
    <location>
        <begin position="61"/>
        <end position="63"/>
    </location>
</feature>
<feature type="helix" evidence="6">
    <location>
        <begin position="66"/>
        <end position="87"/>
    </location>
</feature>
<feature type="helix" evidence="6">
    <location>
        <begin position="99"/>
        <end position="109"/>
    </location>
</feature>
<feature type="helix" evidence="6">
    <location>
        <begin position="112"/>
        <end position="125"/>
    </location>
</feature>
<feature type="strand" evidence="6">
    <location>
        <begin position="128"/>
        <end position="137"/>
    </location>
</feature>
<feature type="strand" evidence="6">
    <location>
        <begin position="140"/>
        <end position="147"/>
    </location>
</feature>
<feature type="helix" evidence="6">
    <location>
        <begin position="152"/>
        <end position="155"/>
    </location>
</feature>
<feature type="strand" evidence="6">
    <location>
        <begin position="158"/>
        <end position="164"/>
    </location>
</feature>
<feature type="helix" evidence="6">
    <location>
        <begin position="167"/>
        <end position="169"/>
    </location>
</feature>
<feature type="helix" evidence="6">
    <location>
        <begin position="171"/>
        <end position="174"/>
    </location>
</feature>
<feature type="helix" evidence="6">
    <location>
        <begin position="178"/>
        <end position="185"/>
    </location>
</feature>
<feature type="helix" evidence="6">
    <location>
        <begin position="186"/>
        <end position="188"/>
    </location>
</feature>
<feature type="helix" evidence="6">
    <location>
        <begin position="191"/>
        <end position="202"/>
    </location>
</feature>
<evidence type="ECO:0000250" key="1"/>
<evidence type="ECO:0000269" key="2">
    <source>
    </source>
</evidence>
<evidence type="ECO:0000269" key="3">
    <source>
    </source>
</evidence>
<evidence type="ECO:0000269" key="4">
    <source>
    </source>
</evidence>
<evidence type="ECO:0000305" key="5"/>
<evidence type="ECO:0007829" key="6">
    <source>
        <dbReference type="PDB" id="6PRO"/>
    </source>
</evidence>
<gene>
    <name type="primary">sodA</name>
</gene>
<dbReference type="EC" id="1.15.1.1"/>
<dbReference type="EMBL" id="M26646">
    <property type="protein sequence ID" value="AAA22600.1"/>
    <property type="molecule type" value="Genomic_DNA"/>
</dbReference>
<dbReference type="EMBL" id="M81914">
    <property type="protein sequence ID" value="AAA22767.1"/>
    <property type="molecule type" value="Genomic_DNA"/>
</dbReference>
<dbReference type="EMBL" id="M81188">
    <property type="protein sequence ID" value="AAA22765.1"/>
    <property type="molecule type" value="Genomic_DNA"/>
</dbReference>
<dbReference type="PIR" id="A35134">
    <property type="entry name" value="DSBSNF"/>
</dbReference>
<dbReference type="RefSeq" id="WP_033010224.1">
    <property type="nucleotide sequence ID" value="NZ_RCTK01000030.1"/>
</dbReference>
<dbReference type="PDB" id="6PRO">
    <property type="method" value="X-ray"/>
    <property type="resolution" value="2.26 A"/>
    <property type="chains" value="A/B=2-203"/>
</dbReference>
<dbReference type="PDBsum" id="6PRO"/>
<dbReference type="SMR" id="P00449"/>
<dbReference type="GeneID" id="89611339"/>
<dbReference type="OrthoDB" id="9803125at2"/>
<dbReference type="GO" id="GO:0005737">
    <property type="term" value="C:cytoplasm"/>
    <property type="evidence" value="ECO:0007669"/>
    <property type="project" value="TreeGrafter"/>
</dbReference>
<dbReference type="GO" id="GO:0046872">
    <property type="term" value="F:metal ion binding"/>
    <property type="evidence" value="ECO:0007669"/>
    <property type="project" value="UniProtKB-KW"/>
</dbReference>
<dbReference type="GO" id="GO:0004784">
    <property type="term" value="F:superoxide dismutase activity"/>
    <property type="evidence" value="ECO:0007669"/>
    <property type="project" value="UniProtKB-EC"/>
</dbReference>
<dbReference type="FunFam" id="1.10.287.990:FF:000001">
    <property type="entry name" value="Superoxide dismutase"/>
    <property type="match status" value="1"/>
</dbReference>
<dbReference type="FunFam" id="3.55.40.20:FF:000001">
    <property type="entry name" value="Superoxide dismutase"/>
    <property type="match status" value="1"/>
</dbReference>
<dbReference type="Gene3D" id="1.10.287.990">
    <property type="entry name" value="Fe,Mn superoxide dismutase (SOD) domain"/>
    <property type="match status" value="1"/>
</dbReference>
<dbReference type="Gene3D" id="3.55.40.20">
    <property type="entry name" value="Iron/manganese superoxide dismutase, C-terminal domain"/>
    <property type="match status" value="1"/>
</dbReference>
<dbReference type="InterPro" id="IPR001189">
    <property type="entry name" value="Mn/Fe_SOD"/>
</dbReference>
<dbReference type="InterPro" id="IPR019833">
    <property type="entry name" value="Mn/Fe_SOD_BS"/>
</dbReference>
<dbReference type="InterPro" id="IPR019832">
    <property type="entry name" value="Mn/Fe_SOD_C"/>
</dbReference>
<dbReference type="InterPro" id="IPR019831">
    <property type="entry name" value="Mn/Fe_SOD_N"/>
</dbReference>
<dbReference type="InterPro" id="IPR036324">
    <property type="entry name" value="Mn/Fe_SOD_N_sf"/>
</dbReference>
<dbReference type="InterPro" id="IPR036314">
    <property type="entry name" value="SOD_C_sf"/>
</dbReference>
<dbReference type="PANTHER" id="PTHR43595">
    <property type="entry name" value="37S RIBOSOMAL PROTEIN S26, MITOCHONDRIAL"/>
    <property type="match status" value="1"/>
</dbReference>
<dbReference type="PANTHER" id="PTHR43595:SF2">
    <property type="entry name" value="SMALL RIBOSOMAL SUBUNIT PROTEIN MS42"/>
    <property type="match status" value="1"/>
</dbReference>
<dbReference type="Pfam" id="PF02777">
    <property type="entry name" value="Sod_Fe_C"/>
    <property type="match status" value="1"/>
</dbReference>
<dbReference type="Pfam" id="PF00081">
    <property type="entry name" value="Sod_Fe_N"/>
    <property type="match status" value="1"/>
</dbReference>
<dbReference type="PIRSF" id="PIRSF000349">
    <property type="entry name" value="SODismutase"/>
    <property type="match status" value="1"/>
</dbReference>
<dbReference type="PRINTS" id="PR01703">
    <property type="entry name" value="MNSODISMTASE"/>
</dbReference>
<dbReference type="SUPFAM" id="SSF54719">
    <property type="entry name" value="Fe,Mn superoxide dismutase (SOD), C-terminal domain"/>
    <property type="match status" value="1"/>
</dbReference>
<dbReference type="SUPFAM" id="SSF46609">
    <property type="entry name" value="Fe,Mn superoxide dismutase (SOD), N-terminal domain"/>
    <property type="match status" value="1"/>
</dbReference>
<dbReference type="PROSITE" id="PS00088">
    <property type="entry name" value="SOD_MN"/>
    <property type="match status" value="1"/>
</dbReference>
<protein>
    <recommendedName>
        <fullName>Superoxide dismutase [Mn]</fullName>
        <ecNumber>1.15.1.1</ecNumber>
    </recommendedName>
</protein>
<reference key="1">
    <citation type="journal article" date="1990" name="J. Bacteriol.">
        <title>Characterization of the Bacillus stearothermophilus manganese superoxide dismutase gene and its ability to complement copper/zinc superoxide dismutase deficiency in Saccharomyces cerevisiae.</title>
        <authorList>
            <person name="Bowler C."/>
            <person name="van Kaer L."/>
            <person name="van Camp W."/>
            <person name="van Montagu M."/>
            <person name="Inze D."/>
            <person name="Dhaese P."/>
        </authorList>
    </citation>
    <scope>NUCLEOTIDE SEQUENCE [GENOMIC DNA]</scope>
</reference>
<reference key="2">
    <citation type="submission" date="1991-12" db="EMBL/GenBank/DDBJ databases">
        <authorList>
            <person name="Brehm J.K."/>
            <person name="Chambers S.P."/>
            <person name="Bown K.J."/>
            <person name="Atkinson T."/>
            <person name="Minton N.P."/>
        </authorList>
    </citation>
    <scope>NUCLEOTIDE SEQUENCE [GENOMIC DNA]</scope>
</reference>
<reference key="3">
    <citation type="journal article" date="1980" name="Biochemistry">
        <title>Superoxide dismutase from Bacillus stearothermophilus. Complete amino acid sequence of a manganese enzyme.</title>
        <authorList>
            <person name="Brock C.J."/>
            <person name="Walker J.E."/>
        </authorList>
    </citation>
    <scope>PROTEIN SEQUENCE OF 2-204</scope>
</reference>
<reference key="4">
    <citation type="journal article" date="1981" name="Eur. J. Biochem.">
        <title>Mass spectrometric sequence studies of a superoxide dismutase from Bacillus stearothermophilus.</title>
        <authorList>
            <person name="Auffret A.D."/>
            <person name="Blake T.J."/>
            <person name="Williams D.H."/>
        </authorList>
    </citation>
    <scope>PROTEIN SEQUENCE OF 2-204</scope>
</reference>
<reference key="5">
    <citation type="journal article" date="1975" name="FEBS Lett.">
        <title>Evolutionary relationships in superoxide dismutase.</title>
        <authorList>
            <person name="Bridgen J."/>
            <person name="Harris J.I."/>
            <person name="Northrop F."/>
        </authorList>
    </citation>
    <scope>PROTEIN SEQUENCE OF 2-61</scope>
</reference>
<reference key="6">
    <citation type="journal article" date="1988" name="J. Mol. Biol.">
        <title>Crystal structure of manganese superoxide dismutase from Bacillus stearothermophilus at 2.4-A resolution.</title>
        <authorList>
            <person name="Parker M.W."/>
            <person name="Blake C.C.F."/>
        </authorList>
    </citation>
    <scope>X-RAY CRYSTALLOGRAPHY (2.4 ANGSTROMS)</scope>
</reference>
<name>SODM_GEOSE</name>
<organism>
    <name type="scientific">Geobacillus stearothermophilus</name>
    <name type="common">Bacillus stearothermophilus</name>
    <dbReference type="NCBI Taxonomy" id="1422"/>
    <lineage>
        <taxon>Bacteria</taxon>
        <taxon>Bacillati</taxon>
        <taxon>Bacillota</taxon>
        <taxon>Bacilli</taxon>
        <taxon>Bacillales</taxon>
        <taxon>Anoxybacillaceae</taxon>
        <taxon>Geobacillus</taxon>
    </lineage>
</organism>
<proteinExistence type="evidence at protein level"/>
<keyword id="KW-0002">3D-structure</keyword>
<keyword id="KW-0903">Direct protein sequencing</keyword>
<keyword id="KW-0464">Manganese</keyword>
<keyword id="KW-0479">Metal-binding</keyword>
<keyword id="KW-0560">Oxidoreductase</keyword>
<keyword id="KW-0597">Phosphoprotein</keyword>